<reference key="1">
    <citation type="journal article" date="2004" name="Proc. Natl. Acad. Sci. U.S.A.">
        <title>The complete genomic sequence of Nocardia farcinica IFM 10152.</title>
        <authorList>
            <person name="Ishikawa J."/>
            <person name="Yamashita A."/>
            <person name="Mikami Y."/>
            <person name="Hoshino Y."/>
            <person name="Kurita H."/>
            <person name="Hotta K."/>
            <person name="Shiba T."/>
            <person name="Hattori M."/>
        </authorList>
    </citation>
    <scope>NUCLEOTIDE SEQUENCE [LARGE SCALE GENOMIC DNA]</scope>
    <source>
        <strain>IFM 10152</strain>
    </source>
</reference>
<keyword id="KW-0067">ATP-binding</keyword>
<keyword id="KW-0319">Glycerol metabolism</keyword>
<keyword id="KW-0418">Kinase</keyword>
<keyword id="KW-0547">Nucleotide-binding</keyword>
<keyword id="KW-1185">Reference proteome</keyword>
<keyword id="KW-0808">Transferase</keyword>
<accession>Q5Z175</accession>
<name>GLPK_NOCFA</name>
<protein>
    <recommendedName>
        <fullName evidence="1">Glycerol kinase</fullName>
        <ecNumber evidence="1">2.7.1.30</ecNumber>
    </recommendedName>
    <alternativeName>
        <fullName evidence="1">ATP:glycerol 3-phosphotransferase</fullName>
    </alternativeName>
    <alternativeName>
        <fullName evidence="1">Glycerokinase</fullName>
        <shortName evidence="1">GK</shortName>
    </alternativeName>
</protein>
<organism>
    <name type="scientific">Nocardia farcinica (strain IFM 10152)</name>
    <dbReference type="NCBI Taxonomy" id="247156"/>
    <lineage>
        <taxon>Bacteria</taxon>
        <taxon>Bacillati</taxon>
        <taxon>Actinomycetota</taxon>
        <taxon>Actinomycetes</taxon>
        <taxon>Mycobacteriales</taxon>
        <taxon>Nocardiaceae</taxon>
        <taxon>Nocardia</taxon>
    </lineage>
</organism>
<proteinExistence type="inferred from homology"/>
<sequence>MRRYVAALDQGTTSTRCIVFDHGGRVLGLAQREHEQIFPRPGWVEHDAETIWRNTELVLAEAMRTLELSAADIAAVGITNQRETTLVWERATGKPIHHAIVWQDTRTDRLVGELGGAQGPTRYQDRTGLPLSTYFAGPKLRWILDHVPDARERAEAGELCFGTMDSWLLWNLTGAHITDVTNASRTMLMDLRTQRWDEDICADFGVPPAMLPEIRSSSEVYGEITAGPLAGVAVAGILGDQQAATFGQACLSPGEAKNTYGTGNFMLLNTGTTPVFSKHGLLTTVCYRLDDQPAVYALEGSIAVTGSLVQWLRDNLGLISSADEIEPLARSVDDNGGAYIVPAFSGLFAPRWRPDARGVIAGLTRFVTKAHLARAVLESTAFQTREVVDAMRADAESQQLDLELTTLKVDGGMTANDLLMQFQSDILDVPVVRPVVAETTALGAAYAAGLAVGYWSGTDDIRANWAADTTWRPTMSDQDRATHLAAWNKAVERTYNWTA</sequence>
<gene>
    <name evidence="1" type="primary">glpK</name>
    <name type="ordered locus">NFA_9710</name>
</gene>
<feature type="chain" id="PRO_1000020753" description="Glycerol kinase">
    <location>
        <begin position="1"/>
        <end position="499"/>
    </location>
</feature>
<feature type="binding site" evidence="1">
    <location>
        <position position="12"/>
    </location>
    <ligand>
        <name>ADP</name>
        <dbReference type="ChEBI" id="CHEBI:456216"/>
    </ligand>
</feature>
<feature type="binding site" evidence="1">
    <location>
        <position position="12"/>
    </location>
    <ligand>
        <name>ATP</name>
        <dbReference type="ChEBI" id="CHEBI:30616"/>
    </ligand>
</feature>
<feature type="binding site" evidence="1">
    <location>
        <position position="12"/>
    </location>
    <ligand>
        <name>sn-glycerol 3-phosphate</name>
        <dbReference type="ChEBI" id="CHEBI:57597"/>
    </ligand>
</feature>
<feature type="binding site" evidence="1">
    <location>
        <position position="13"/>
    </location>
    <ligand>
        <name>ATP</name>
        <dbReference type="ChEBI" id="CHEBI:30616"/>
    </ligand>
</feature>
<feature type="binding site" evidence="1">
    <location>
        <position position="14"/>
    </location>
    <ligand>
        <name>ATP</name>
        <dbReference type="ChEBI" id="CHEBI:30616"/>
    </ligand>
</feature>
<feature type="binding site" evidence="1">
    <location>
        <position position="16"/>
    </location>
    <ligand>
        <name>ADP</name>
        <dbReference type="ChEBI" id="CHEBI:456216"/>
    </ligand>
</feature>
<feature type="binding site" evidence="1">
    <location>
        <position position="82"/>
    </location>
    <ligand>
        <name>glycerol</name>
        <dbReference type="ChEBI" id="CHEBI:17754"/>
    </ligand>
</feature>
<feature type="binding site" evidence="1">
    <location>
        <position position="82"/>
    </location>
    <ligand>
        <name>sn-glycerol 3-phosphate</name>
        <dbReference type="ChEBI" id="CHEBI:57597"/>
    </ligand>
</feature>
<feature type="binding site" evidence="1">
    <location>
        <position position="83"/>
    </location>
    <ligand>
        <name>glycerol</name>
        <dbReference type="ChEBI" id="CHEBI:17754"/>
    </ligand>
</feature>
<feature type="binding site" evidence="1">
    <location>
        <position position="83"/>
    </location>
    <ligand>
        <name>sn-glycerol 3-phosphate</name>
        <dbReference type="ChEBI" id="CHEBI:57597"/>
    </ligand>
</feature>
<feature type="binding site" evidence="1">
    <location>
        <position position="134"/>
    </location>
    <ligand>
        <name>glycerol</name>
        <dbReference type="ChEBI" id="CHEBI:17754"/>
    </ligand>
</feature>
<feature type="binding site" evidence="1">
    <location>
        <position position="134"/>
    </location>
    <ligand>
        <name>sn-glycerol 3-phosphate</name>
        <dbReference type="ChEBI" id="CHEBI:57597"/>
    </ligand>
</feature>
<feature type="binding site" evidence="1">
    <location>
        <position position="240"/>
    </location>
    <ligand>
        <name>glycerol</name>
        <dbReference type="ChEBI" id="CHEBI:17754"/>
    </ligand>
</feature>
<feature type="binding site" evidence="1">
    <location>
        <position position="240"/>
    </location>
    <ligand>
        <name>sn-glycerol 3-phosphate</name>
        <dbReference type="ChEBI" id="CHEBI:57597"/>
    </ligand>
</feature>
<feature type="binding site" evidence="1">
    <location>
        <position position="241"/>
    </location>
    <ligand>
        <name>glycerol</name>
        <dbReference type="ChEBI" id="CHEBI:17754"/>
    </ligand>
</feature>
<feature type="binding site" evidence="1">
    <location>
        <position position="262"/>
    </location>
    <ligand>
        <name>ADP</name>
        <dbReference type="ChEBI" id="CHEBI:456216"/>
    </ligand>
</feature>
<feature type="binding site" evidence="1">
    <location>
        <position position="262"/>
    </location>
    <ligand>
        <name>ATP</name>
        <dbReference type="ChEBI" id="CHEBI:30616"/>
    </ligand>
</feature>
<feature type="binding site" evidence="1">
    <location>
        <position position="306"/>
    </location>
    <ligand>
        <name>ADP</name>
        <dbReference type="ChEBI" id="CHEBI:456216"/>
    </ligand>
</feature>
<feature type="binding site" evidence="1">
    <location>
        <position position="306"/>
    </location>
    <ligand>
        <name>ATP</name>
        <dbReference type="ChEBI" id="CHEBI:30616"/>
    </ligand>
</feature>
<feature type="binding site" evidence="1">
    <location>
        <position position="310"/>
    </location>
    <ligand>
        <name>ATP</name>
        <dbReference type="ChEBI" id="CHEBI:30616"/>
    </ligand>
</feature>
<feature type="binding site" evidence="1">
    <location>
        <position position="412"/>
    </location>
    <ligand>
        <name>ADP</name>
        <dbReference type="ChEBI" id="CHEBI:456216"/>
    </ligand>
</feature>
<feature type="binding site" evidence="1">
    <location>
        <position position="412"/>
    </location>
    <ligand>
        <name>ATP</name>
        <dbReference type="ChEBI" id="CHEBI:30616"/>
    </ligand>
</feature>
<feature type="binding site" evidence="1">
    <location>
        <position position="416"/>
    </location>
    <ligand>
        <name>ADP</name>
        <dbReference type="ChEBI" id="CHEBI:456216"/>
    </ligand>
</feature>
<dbReference type="EC" id="2.7.1.30" evidence="1"/>
<dbReference type="EMBL" id="AP006618">
    <property type="protein sequence ID" value="BAD55816.1"/>
    <property type="molecule type" value="Genomic_DNA"/>
</dbReference>
<dbReference type="RefSeq" id="WP_011207501.1">
    <property type="nucleotide sequence ID" value="NC_006361.1"/>
</dbReference>
<dbReference type="SMR" id="Q5Z175"/>
<dbReference type="STRING" id="247156.NFA_9710"/>
<dbReference type="GeneID" id="61131793"/>
<dbReference type="KEGG" id="nfa:NFA_9710"/>
<dbReference type="eggNOG" id="COG0554">
    <property type="taxonomic scope" value="Bacteria"/>
</dbReference>
<dbReference type="HOGENOM" id="CLU_009281_2_3_11"/>
<dbReference type="OrthoDB" id="9805576at2"/>
<dbReference type="UniPathway" id="UPA00618">
    <property type="reaction ID" value="UER00672"/>
</dbReference>
<dbReference type="Proteomes" id="UP000006820">
    <property type="component" value="Chromosome"/>
</dbReference>
<dbReference type="GO" id="GO:0005829">
    <property type="term" value="C:cytosol"/>
    <property type="evidence" value="ECO:0007669"/>
    <property type="project" value="TreeGrafter"/>
</dbReference>
<dbReference type="GO" id="GO:0005524">
    <property type="term" value="F:ATP binding"/>
    <property type="evidence" value="ECO:0007669"/>
    <property type="project" value="UniProtKB-UniRule"/>
</dbReference>
<dbReference type="GO" id="GO:0004370">
    <property type="term" value="F:glycerol kinase activity"/>
    <property type="evidence" value="ECO:0000250"/>
    <property type="project" value="UniProtKB"/>
</dbReference>
<dbReference type="GO" id="GO:0019563">
    <property type="term" value="P:glycerol catabolic process"/>
    <property type="evidence" value="ECO:0007669"/>
    <property type="project" value="UniProtKB-UniRule"/>
</dbReference>
<dbReference type="GO" id="GO:0006071">
    <property type="term" value="P:glycerol metabolic process"/>
    <property type="evidence" value="ECO:0000250"/>
    <property type="project" value="UniProtKB"/>
</dbReference>
<dbReference type="GO" id="GO:0006072">
    <property type="term" value="P:glycerol-3-phosphate metabolic process"/>
    <property type="evidence" value="ECO:0007669"/>
    <property type="project" value="InterPro"/>
</dbReference>
<dbReference type="CDD" id="cd07769">
    <property type="entry name" value="ASKHA_NBD_FGGY_GK"/>
    <property type="match status" value="1"/>
</dbReference>
<dbReference type="FunFam" id="3.30.420.40:FF:000007">
    <property type="entry name" value="Glycerol kinase"/>
    <property type="match status" value="1"/>
</dbReference>
<dbReference type="FunFam" id="3.30.420.40:FF:000008">
    <property type="entry name" value="Glycerol kinase"/>
    <property type="match status" value="1"/>
</dbReference>
<dbReference type="Gene3D" id="3.30.420.40">
    <property type="match status" value="2"/>
</dbReference>
<dbReference type="HAMAP" id="MF_00186">
    <property type="entry name" value="Glycerol_kin"/>
    <property type="match status" value="1"/>
</dbReference>
<dbReference type="InterPro" id="IPR043129">
    <property type="entry name" value="ATPase_NBD"/>
</dbReference>
<dbReference type="InterPro" id="IPR000577">
    <property type="entry name" value="Carb_kinase_FGGY"/>
</dbReference>
<dbReference type="InterPro" id="IPR018483">
    <property type="entry name" value="Carb_kinase_FGGY_CS"/>
</dbReference>
<dbReference type="InterPro" id="IPR018485">
    <property type="entry name" value="FGGY_C"/>
</dbReference>
<dbReference type="InterPro" id="IPR018484">
    <property type="entry name" value="FGGY_N"/>
</dbReference>
<dbReference type="InterPro" id="IPR005999">
    <property type="entry name" value="Glycerol_kin"/>
</dbReference>
<dbReference type="NCBIfam" id="TIGR01311">
    <property type="entry name" value="glycerol_kin"/>
    <property type="match status" value="1"/>
</dbReference>
<dbReference type="NCBIfam" id="NF000756">
    <property type="entry name" value="PRK00047.1"/>
    <property type="match status" value="1"/>
</dbReference>
<dbReference type="PANTHER" id="PTHR10196:SF69">
    <property type="entry name" value="GLYCEROL KINASE"/>
    <property type="match status" value="1"/>
</dbReference>
<dbReference type="PANTHER" id="PTHR10196">
    <property type="entry name" value="SUGAR KINASE"/>
    <property type="match status" value="1"/>
</dbReference>
<dbReference type="Pfam" id="PF02782">
    <property type="entry name" value="FGGY_C"/>
    <property type="match status" value="1"/>
</dbReference>
<dbReference type="Pfam" id="PF00370">
    <property type="entry name" value="FGGY_N"/>
    <property type="match status" value="1"/>
</dbReference>
<dbReference type="PIRSF" id="PIRSF000538">
    <property type="entry name" value="GlpK"/>
    <property type="match status" value="1"/>
</dbReference>
<dbReference type="SUPFAM" id="SSF53067">
    <property type="entry name" value="Actin-like ATPase domain"/>
    <property type="match status" value="2"/>
</dbReference>
<dbReference type="PROSITE" id="PS00445">
    <property type="entry name" value="FGGY_KINASES_2"/>
    <property type="match status" value="1"/>
</dbReference>
<evidence type="ECO:0000255" key="1">
    <source>
        <dbReference type="HAMAP-Rule" id="MF_00186"/>
    </source>
</evidence>
<comment type="function">
    <text evidence="1">Key enzyme in the regulation of glycerol uptake and metabolism. Catalyzes the phosphorylation of glycerol to yield sn-glycerol 3-phosphate.</text>
</comment>
<comment type="catalytic activity">
    <reaction evidence="1">
        <text>glycerol + ATP = sn-glycerol 3-phosphate + ADP + H(+)</text>
        <dbReference type="Rhea" id="RHEA:21644"/>
        <dbReference type="ChEBI" id="CHEBI:15378"/>
        <dbReference type="ChEBI" id="CHEBI:17754"/>
        <dbReference type="ChEBI" id="CHEBI:30616"/>
        <dbReference type="ChEBI" id="CHEBI:57597"/>
        <dbReference type="ChEBI" id="CHEBI:456216"/>
        <dbReference type="EC" id="2.7.1.30"/>
    </reaction>
</comment>
<comment type="activity regulation">
    <text evidence="1">Inhibited by fructose 1,6-bisphosphate (FBP).</text>
</comment>
<comment type="pathway">
    <text evidence="1">Polyol metabolism; glycerol degradation via glycerol kinase pathway; sn-glycerol 3-phosphate from glycerol: step 1/1.</text>
</comment>
<comment type="similarity">
    <text evidence="1">Belongs to the FGGY kinase family.</text>
</comment>